<evidence type="ECO:0000255" key="1">
    <source>
        <dbReference type="HAMAP-Rule" id="MF_00274"/>
    </source>
</evidence>
<dbReference type="EMBL" id="CP000348">
    <property type="protein sequence ID" value="ABJ77693.1"/>
    <property type="molecule type" value="Genomic_DNA"/>
</dbReference>
<dbReference type="RefSeq" id="WP_002730501.1">
    <property type="nucleotide sequence ID" value="NC_008508.1"/>
</dbReference>
<dbReference type="SMR" id="Q056Q2"/>
<dbReference type="KEGG" id="lbl:LBL_0065"/>
<dbReference type="HOGENOM" id="CLU_140930_0_1_12"/>
<dbReference type="GO" id="GO:0043590">
    <property type="term" value="C:bacterial nucleoid"/>
    <property type="evidence" value="ECO:0007669"/>
    <property type="project" value="UniProtKB-UniRule"/>
</dbReference>
<dbReference type="GO" id="GO:0005829">
    <property type="term" value="C:cytosol"/>
    <property type="evidence" value="ECO:0007669"/>
    <property type="project" value="TreeGrafter"/>
</dbReference>
<dbReference type="GO" id="GO:0003677">
    <property type="term" value="F:DNA binding"/>
    <property type="evidence" value="ECO:0007669"/>
    <property type="project" value="UniProtKB-UniRule"/>
</dbReference>
<dbReference type="FunFam" id="3.30.1310.10:FF:000006">
    <property type="entry name" value="Nucleoid-associated protein LEP1GSC116_0101"/>
    <property type="match status" value="1"/>
</dbReference>
<dbReference type="Gene3D" id="3.30.1310.10">
    <property type="entry name" value="Nucleoid-associated protein YbaB-like domain"/>
    <property type="match status" value="1"/>
</dbReference>
<dbReference type="HAMAP" id="MF_00274">
    <property type="entry name" value="DNA_YbaB_EbfC"/>
    <property type="match status" value="1"/>
</dbReference>
<dbReference type="InterPro" id="IPR036894">
    <property type="entry name" value="YbaB-like_sf"/>
</dbReference>
<dbReference type="InterPro" id="IPR004401">
    <property type="entry name" value="YbaB/EbfC"/>
</dbReference>
<dbReference type="NCBIfam" id="TIGR00103">
    <property type="entry name" value="DNA_YbaB_EbfC"/>
    <property type="match status" value="1"/>
</dbReference>
<dbReference type="PANTHER" id="PTHR33449">
    <property type="entry name" value="NUCLEOID-ASSOCIATED PROTEIN YBAB"/>
    <property type="match status" value="1"/>
</dbReference>
<dbReference type="PANTHER" id="PTHR33449:SF1">
    <property type="entry name" value="NUCLEOID-ASSOCIATED PROTEIN YBAB"/>
    <property type="match status" value="1"/>
</dbReference>
<dbReference type="Pfam" id="PF02575">
    <property type="entry name" value="YbaB_DNA_bd"/>
    <property type="match status" value="1"/>
</dbReference>
<dbReference type="PIRSF" id="PIRSF004555">
    <property type="entry name" value="UCP004555"/>
    <property type="match status" value="1"/>
</dbReference>
<dbReference type="SUPFAM" id="SSF82607">
    <property type="entry name" value="YbaB-like"/>
    <property type="match status" value="1"/>
</dbReference>
<comment type="function">
    <text evidence="1">Binds to DNA and alters its conformation. May be involved in regulation of gene expression, nucleoid organization and DNA protection.</text>
</comment>
<comment type="subunit">
    <text evidence="1">Homodimer.</text>
</comment>
<comment type="subcellular location">
    <subcellularLocation>
        <location evidence="1">Cytoplasm</location>
        <location evidence="1">Nucleoid</location>
    </subcellularLocation>
</comment>
<comment type="similarity">
    <text evidence="1">Belongs to the YbaB/EbfC family.</text>
</comment>
<accession>Q056Q2</accession>
<protein>
    <recommendedName>
        <fullName evidence="1">Nucleoid-associated protein LBL_0065</fullName>
    </recommendedName>
</protein>
<proteinExistence type="inferred from homology"/>
<name>Y065_LEPBL</name>
<feature type="chain" id="PRO_1000003765" description="Nucleoid-associated protein LBL_0065">
    <location>
        <begin position="1"/>
        <end position="115"/>
    </location>
</feature>
<sequence>MLDKIKNLSELLSNMGALREKMEDVKKRIASIRVVGDAGAGMVTVTATGEGQIINVFINKQLFDSDDNKMLEDLVMAATNDALKKAKEATAYEFQAASGGLDFSEISKMFGGNFG</sequence>
<keyword id="KW-0963">Cytoplasm</keyword>
<keyword id="KW-0238">DNA-binding</keyword>
<gene>
    <name type="ordered locus">LBL_0065</name>
</gene>
<organism>
    <name type="scientific">Leptospira borgpetersenii serovar Hardjo-bovis (strain L550)</name>
    <dbReference type="NCBI Taxonomy" id="355276"/>
    <lineage>
        <taxon>Bacteria</taxon>
        <taxon>Pseudomonadati</taxon>
        <taxon>Spirochaetota</taxon>
        <taxon>Spirochaetia</taxon>
        <taxon>Leptospirales</taxon>
        <taxon>Leptospiraceae</taxon>
        <taxon>Leptospira</taxon>
    </lineage>
</organism>
<reference key="1">
    <citation type="journal article" date="2006" name="Proc. Natl. Acad. Sci. U.S.A.">
        <title>Genome reduction in Leptospira borgpetersenii reflects limited transmission potential.</title>
        <authorList>
            <person name="Bulach D.M."/>
            <person name="Zuerner R.L."/>
            <person name="Wilson P."/>
            <person name="Seemann T."/>
            <person name="McGrath A."/>
            <person name="Cullen P.A."/>
            <person name="Davis J."/>
            <person name="Johnson M."/>
            <person name="Kuczek E."/>
            <person name="Alt D.P."/>
            <person name="Peterson-Burch B."/>
            <person name="Coppel R.L."/>
            <person name="Rood J.I."/>
            <person name="Davies J.K."/>
            <person name="Adler B."/>
        </authorList>
    </citation>
    <scope>NUCLEOTIDE SEQUENCE [LARGE SCALE GENOMIC DNA]</scope>
    <source>
        <strain>L550</strain>
    </source>
</reference>